<organism>
    <name type="scientific">Staphylococcus aureus (strain MRSA252)</name>
    <dbReference type="NCBI Taxonomy" id="282458"/>
    <lineage>
        <taxon>Bacteria</taxon>
        <taxon>Bacillati</taxon>
        <taxon>Bacillota</taxon>
        <taxon>Bacilli</taxon>
        <taxon>Bacillales</taxon>
        <taxon>Staphylococcaceae</taxon>
        <taxon>Staphylococcus</taxon>
    </lineage>
</organism>
<feature type="signal peptide" evidence="2">
    <location>
        <begin position="1"/>
        <end position="19"/>
    </location>
</feature>
<feature type="chain" id="PRO_0000326209" description="High-affinity heme uptake system protein IsdE">
    <location>
        <begin position="20"/>
        <end position="292"/>
    </location>
</feature>
<feature type="domain" description="Fe/B12 periplasmic-binding" evidence="3">
    <location>
        <begin position="35"/>
        <end position="291"/>
    </location>
</feature>
<feature type="binding site" evidence="1">
    <location>
        <position position="41"/>
    </location>
    <ligand>
        <name>heme</name>
        <dbReference type="ChEBI" id="CHEBI:30413"/>
    </ligand>
</feature>
<feature type="binding site" evidence="1">
    <location>
        <position position="42"/>
    </location>
    <ligand>
        <name>heme</name>
        <dbReference type="ChEBI" id="CHEBI:30413"/>
    </ligand>
</feature>
<feature type="binding site" evidence="1">
    <location>
        <position position="60"/>
    </location>
    <ligand>
        <name>heme</name>
        <dbReference type="ChEBI" id="CHEBI:30413"/>
    </ligand>
</feature>
<feature type="binding site" evidence="1">
    <location>
        <position position="61"/>
    </location>
    <ligand>
        <name>heme</name>
        <dbReference type="ChEBI" id="CHEBI:30413"/>
    </ligand>
</feature>
<feature type="binding site" description="axial binding residue" evidence="1">
    <location>
        <position position="78"/>
    </location>
    <ligand>
        <name>heme</name>
        <dbReference type="ChEBI" id="CHEBI:30413"/>
    </ligand>
    <ligandPart>
        <name>Fe</name>
        <dbReference type="ChEBI" id="CHEBI:18248"/>
    </ligandPart>
</feature>
<feature type="binding site" description="axial binding residue" evidence="1">
    <location>
        <position position="229"/>
    </location>
    <ligand>
        <name>heme</name>
        <dbReference type="ChEBI" id="CHEBI:30413"/>
    </ligand>
    <ligandPart>
        <name>Fe</name>
        <dbReference type="ChEBI" id="CHEBI:18248"/>
    </ligandPart>
</feature>
<feature type="lipid moiety-binding region" description="N-palmitoyl cysteine" evidence="2">
    <location>
        <position position="20"/>
    </location>
</feature>
<feature type="lipid moiety-binding region" description="S-diacylglycerol cysteine" evidence="2">
    <location>
        <position position="20"/>
    </location>
</feature>
<name>ISDE_STAAR</name>
<evidence type="ECO:0000250" key="1"/>
<evidence type="ECO:0000255" key="2">
    <source>
        <dbReference type="PROSITE-ProRule" id="PRU00303"/>
    </source>
</evidence>
<evidence type="ECO:0000255" key="3">
    <source>
        <dbReference type="PROSITE-ProRule" id="PRU00344"/>
    </source>
</evidence>
<evidence type="ECO:0000305" key="4"/>
<sequence length="292" mass="33261">MRIIKYLTILVISVVILTSCQSSSSQESTKSGEFRIVPTTVALTMTLDKLDLPIVGKPTSYKTLPNRYKDVPEIGQPMEPNVEAVKKLKPTHVLSVSTIKDEMQPFYKQLNMKGYFYDFDSLKGMQKSITQLGDQFNRKAQAKELNDHLNSVKQKIENKAAKQKKHPKVLILMGVPGSYLVATDKSYIGDLVKIAGGENVIKVKDRQYISSNTENLLNINPDIILRLPHGMSEEVKKMFQKEFKQNDIWKHFKAVKNNHVYDLEEVPFGITANVDADKAMTQLYDLFYKDKK</sequence>
<gene>
    <name type="primary">isdE</name>
    <name type="synonym">sirF</name>
    <name type="ordered locus">SAR1106</name>
</gene>
<dbReference type="EMBL" id="BX571856">
    <property type="protein sequence ID" value="CAG40108.1"/>
    <property type="molecule type" value="Genomic_DNA"/>
</dbReference>
<dbReference type="RefSeq" id="WP_001220201.1">
    <property type="nucleotide sequence ID" value="NC_002952.2"/>
</dbReference>
<dbReference type="SMR" id="Q6GHV3"/>
<dbReference type="KEGG" id="sar:SAR1106"/>
<dbReference type="HOGENOM" id="CLU_038034_2_3_9"/>
<dbReference type="Proteomes" id="UP000000596">
    <property type="component" value="Chromosome"/>
</dbReference>
<dbReference type="GO" id="GO:0005886">
    <property type="term" value="C:plasma membrane"/>
    <property type="evidence" value="ECO:0007669"/>
    <property type="project" value="UniProtKB-SubCell"/>
</dbReference>
<dbReference type="GO" id="GO:0020037">
    <property type="term" value="F:heme binding"/>
    <property type="evidence" value="ECO:0007669"/>
    <property type="project" value="InterPro"/>
</dbReference>
<dbReference type="GO" id="GO:0046872">
    <property type="term" value="F:metal ion binding"/>
    <property type="evidence" value="ECO:0007669"/>
    <property type="project" value="UniProtKB-KW"/>
</dbReference>
<dbReference type="GO" id="GO:0071281">
    <property type="term" value="P:cellular response to iron ion"/>
    <property type="evidence" value="ECO:0007669"/>
    <property type="project" value="TreeGrafter"/>
</dbReference>
<dbReference type="GO" id="GO:0015886">
    <property type="term" value="P:heme transport"/>
    <property type="evidence" value="ECO:0007669"/>
    <property type="project" value="InterPro"/>
</dbReference>
<dbReference type="FunFam" id="3.40.50.1980:FF:000022">
    <property type="entry name" value="Heme ABC transporter substrate-binding protein IsdE"/>
    <property type="match status" value="1"/>
</dbReference>
<dbReference type="FunFam" id="3.40.50.1980:FF:000031">
    <property type="entry name" value="High-affinity heme uptake system protein IsdE"/>
    <property type="match status" value="1"/>
</dbReference>
<dbReference type="Gene3D" id="3.40.50.1980">
    <property type="entry name" value="Nitrogenase molybdenum iron protein domain"/>
    <property type="match status" value="2"/>
</dbReference>
<dbReference type="InterPro" id="IPR050902">
    <property type="entry name" value="ABC_Transporter_SBP"/>
</dbReference>
<dbReference type="InterPro" id="IPR019957">
    <property type="entry name" value="ABC_transptr_haem-bd_IsdE"/>
</dbReference>
<dbReference type="InterPro" id="IPR002491">
    <property type="entry name" value="ABC_transptr_periplasmic_BD"/>
</dbReference>
<dbReference type="NCBIfam" id="TIGR03659">
    <property type="entry name" value="IsdE"/>
    <property type="match status" value="1"/>
</dbReference>
<dbReference type="PANTHER" id="PTHR30535:SF36">
    <property type="entry name" value="HIGH-AFFINITY HEME UPTAKE SYSTEM PROTEIN ISDE"/>
    <property type="match status" value="1"/>
</dbReference>
<dbReference type="PANTHER" id="PTHR30535">
    <property type="entry name" value="VITAMIN B12-BINDING PROTEIN"/>
    <property type="match status" value="1"/>
</dbReference>
<dbReference type="Pfam" id="PF01497">
    <property type="entry name" value="Peripla_BP_2"/>
    <property type="match status" value="1"/>
</dbReference>
<dbReference type="SUPFAM" id="SSF53807">
    <property type="entry name" value="Helical backbone' metal receptor"/>
    <property type="match status" value="1"/>
</dbReference>
<dbReference type="PROSITE" id="PS50983">
    <property type="entry name" value="FE_B12_PBP"/>
    <property type="match status" value="1"/>
</dbReference>
<dbReference type="PROSITE" id="PS51257">
    <property type="entry name" value="PROKAR_LIPOPROTEIN"/>
    <property type="match status" value="1"/>
</dbReference>
<reference key="1">
    <citation type="journal article" date="2004" name="Proc. Natl. Acad. Sci. U.S.A.">
        <title>Complete genomes of two clinical Staphylococcus aureus strains: evidence for the rapid evolution of virulence and drug resistance.</title>
        <authorList>
            <person name="Holden M.T.G."/>
            <person name="Feil E.J."/>
            <person name="Lindsay J.A."/>
            <person name="Peacock S.J."/>
            <person name="Day N.P.J."/>
            <person name="Enright M.C."/>
            <person name="Foster T.J."/>
            <person name="Moore C.E."/>
            <person name="Hurst L."/>
            <person name="Atkin R."/>
            <person name="Barron A."/>
            <person name="Bason N."/>
            <person name="Bentley S.D."/>
            <person name="Chillingworth C."/>
            <person name="Chillingworth T."/>
            <person name="Churcher C."/>
            <person name="Clark L."/>
            <person name="Corton C."/>
            <person name="Cronin A."/>
            <person name="Doggett J."/>
            <person name="Dowd L."/>
            <person name="Feltwell T."/>
            <person name="Hance Z."/>
            <person name="Harris B."/>
            <person name="Hauser H."/>
            <person name="Holroyd S."/>
            <person name="Jagels K."/>
            <person name="James K.D."/>
            <person name="Lennard N."/>
            <person name="Line A."/>
            <person name="Mayes R."/>
            <person name="Moule S."/>
            <person name="Mungall K."/>
            <person name="Ormond D."/>
            <person name="Quail M.A."/>
            <person name="Rabbinowitsch E."/>
            <person name="Rutherford K.M."/>
            <person name="Sanders M."/>
            <person name="Sharp S."/>
            <person name="Simmonds M."/>
            <person name="Stevens K."/>
            <person name="Whitehead S."/>
            <person name="Barrell B.G."/>
            <person name="Spratt B.G."/>
            <person name="Parkhill J."/>
        </authorList>
    </citation>
    <scope>NUCLEOTIDE SEQUENCE [LARGE SCALE GENOMIC DNA]</scope>
    <source>
        <strain>MRSA252</strain>
    </source>
</reference>
<accession>Q6GHV3</accession>
<protein>
    <recommendedName>
        <fullName>High-affinity heme uptake system protein IsdE</fullName>
    </recommendedName>
    <alternativeName>
        <fullName>Iron-regulated surface determinant protein E</fullName>
    </alternativeName>
    <alternativeName>
        <fullName>Staphylococcal iron-regulated protein F</fullName>
    </alternativeName>
</protein>
<keyword id="KW-1003">Cell membrane</keyword>
<keyword id="KW-0349">Heme</keyword>
<keyword id="KW-0408">Iron</keyword>
<keyword id="KW-0449">Lipoprotein</keyword>
<keyword id="KW-0472">Membrane</keyword>
<keyword id="KW-0479">Metal-binding</keyword>
<keyword id="KW-0564">Palmitate</keyword>
<keyword id="KW-0732">Signal</keyword>
<keyword id="KW-0813">Transport</keyword>
<comment type="function">
    <text evidence="1">Involved in heme (porphyrin) scavenging. Binds Fe(2+) and Fe(3+) heme but the largest fraction is Fe(2+) heme. Functions as a high-affinity heme binding protein and probably has a role in relaying heme-iron from cell wall-anchored isd proteins receptors to the probable permease IsdF (By similarity).</text>
</comment>
<comment type="cofactor">
    <cofactor evidence="1">
        <name>heme b</name>
        <dbReference type="ChEBI" id="CHEBI:60344"/>
    </cofactor>
    <text evidence="1">Binds 1 heme b (iron(II)-protoporphyrin IX) group per subunit.</text>
</comment>
<comment type="subcellular location">
    <subcellularLocation>
        <location evidence="2">Cell membrane</location>
        <topology evidence="2">Lipid-anchor</topology>
    </subcellularLocation>
</comment>
<comment type="induction">
    <text evidence="1">Repressed by fur in the presence of iron.</text>
</comment>
<comment type="similarity">
    <text evidence="4">Belongs to the bacterial solute-binding protein 8 family.</text>
</comment>
<proteinExistence type="inferred from homology"/>